<reference key="1">
    <citation type="journal article" date="2007" name="Photosyn. Res.">
        <title>Complete nucleotide sequence of the freshwater unicellular cyanobacterium Synechococcus elongatus PCC 6301 chromosome: gene content and organization.</title>
        <authorList>
            <person name="Sugita C."/>
            <person name="Ogata K."/>
            <person name="Shikata M."/>
            <person name="Jikuya H."/>
            <person name="Takano J."/>
            <person name="Furumichi M."/>
            <person name="Kanehisa M."/>
            <person name="Omata T."/>
            <person name="Sugiura M."/>
            <person name="Sugita M."/>
        </authorList>
    </citation>
    <scope>NUCLEOTIDE SEQUENCE [LARGE SCALE GENOMIC DNA]</scope>
    <source>
        <strain>ATCC 27144 / PCC 6301 / SAUG 1402/1</strain>
    </source>
</reference>
<dbReference type="EC" id="2.5.1.6" evidence="1"/>
<dbReference type="EMBL" id="AP008231">
    <property type="protein sequence ID" value="BAD79831.1"/>
    <property type="molecule type" value="Genomic_DNA"/>
</dbReference>
<dbReference type="SMR" id="Q5N1I9"/>
<dbReference type="KEGG" id="syc:syc1641_d"/>
<dbReference type="eggNOG" id="COG0192">
    <property type="taxonomic scope" value="Bacteria"/>
</dbReference>
<dbReference type="UniPathway" id="UPA00315">
    <property type="reaction ID" value="UER00080"/>
</dbReference>
<dbReference type="Proteomes" id="UP000001175">
    <property type="component" value="Chromosome"/>
</dbReference>
<dbReference type="GO" id="GO:0005737">
    <property type="term" value="C:cytoplasm"/>
    <property type="evidence" value="ECO:0007669"/>
    <property type="project" value="UniProtKB-SubCell"/>
</dbReference>
<dbReference type="GO" id="GO:0005524">
    <property type="term" value="F:ATP binding"/>
    <property type="evidence" value="ECO:0007669"/>
    <property type="project" value="UniProtKB-UniRule"/>
</dbReference>
<dbReference type="GO" id="GO:0000287">
    <property type="term" value="F:magnesium ion binding"/>
    <property type="evidence" value="ECO:0007669"/>
    <property type="project" value="UniProtKB-UniRule"/>
</dbReference>
<dbReference type="GO" id="GO:0004478">
    <property type="term" value="F:methionine adenosyltransferase activity"/>
    <property type="evidence" value="ECO:0007669"/>
    <property type="project" value="UniProtKB-UniRule"/>
</dbReference>
<dbReference type="GO" id="GO:0006730">
    <property type="term" value="P:one-carbon metabolic process"/>
    <property type="evidence" value="ECO:0007669"/>
    <property type="project" value="UniProtKB-KW"/>
</dbReference>
<dbReference type="GO" id="GO:0006556">
    <property type="term" value="P:S-adenosylmethionine biosynthetic process"/>
    <property type="evidence" value="ECO:0007669"/>
    <property type="project" value="UniProtKB-UniRule"/>
</dbReference>
<dbReference type="CDD" id="cd18079">
    <property type="entry name" value="S-AdoMet_synt"/>
    <property type="match status" value="1"/>
</dbReference>
<dbReference type="FunFam" id="3.30.300.10:FF:000003">
    <property type="entry name" value="S-adenosylmethionine synthase"/>
    <property type="match status" value="1"/>
</dbReference>
<dbReference type="Gene3D" id="3.30.300.10">
    <property type="match status" value="3"/>
</dbReference>
<dbReference type="HAMAP" id="MF_00086">
    <property type="entry name" value="S_AdoMet_synth1"/>
    <property type="match status" value="1"/>
</dbReference>
<dbReference type="InterPro" id="IPR022631">
    <property type="entry name" value="ADOMET_SYNTHASE_CS"/>
</dbReference>
<dbReference type="InterPro" id="IPR022630">
    <property type="entry name" value="S-AdoMet_synt_C"/>
</dbReference>
<dbReference type="InterPro" id="IPR022629">
    <property type="entry name" value="S-AdoMet_synt_central"/>
</dbReference>
<dbReference type="InterPro" id="IPR022628">
    <property type="entry name" value="S-AdoMet_synt_N"/>
</dbReference>
<dbReference type="InterPro" id="IPR002133">
    <property type="entry name" value="S-AdoMet_synthetase"/>
</dbReference>
<dbReference type="InterPro" id="IPR022636">
    <property type="entry name" value="S-AdoMet_synthetase_sfam"/>
</dbReference>
<dbReference type="NCBIfam" id="TIGR01034">
    <property type="entry name" value="metK"/>
    <property type="match status" value="1"/>
</dbReference>
<dbReference type="PANTHER" id="PTHR11964">
    <property type="entry name" value="S-ADENOSYLMETHIONINE SYNTHETASE"/>
    <property type="match status" value="1"/>
</dbReference>
<dbReference type="Pfam" id="PF02773">
    <property type="entry name" value="S-AdoMet_synt_C"/>
    <property type="match status" value="1"/>
</dbReference>
<dbReference type="Pfam" id="PF02772">
    <property type="entry name" value="S-AdoMet_synt_M"/>
    <property type="match status" value="1"/>
</dbReference>
<dbReference type="Pfam" id="PF00438">
    <property type="entry name" value="S-AdoMet_synt_N"/>
    <property type="match status" value="1"/>
</dbReference>
<dbReference type="PIRSF" id="PIRSF000497">
    <property type="entry name" value="MAT"/>
    <property type="match status" value="1"/>
</dbReference>
<dbReference type="SUPFAM" id="SSF55973">
    <property type="entry name" value="S-adenosylmethionine synthetase"/>
    <property type="match status" value="3"/>
</dbReference>
<dbReference type="PROSITE" id="PS00376">
    <property type="entry name" value="ADOMET_SYNTHASE_1"/>
    <property type="match status" value="1"/>
</dbReference>
<dbReference type="PROSITE" id="PS00377">
    <property type="entry name" value="ADOMET_SYNTHASE_2"/>
    <property type="match status" value="1"/>
</dbReference>
<proteinExistence type="inferred from homology"/>
<sequence>MTEGHPDKICDQISDTILDALLTEDPSSRVAAEVVVNTGLVLITGEVSTQAQTNLIDLARRKIAETGYTGEDSGFGANNCTVLIALDKQSPDIAQGVDTAQEQRQASSDERFDSIGAGDQGIMFGYACNEAPELMPLPISLSHRLARQLAVVRHNGQLDYLRPDGKTQVTIAYEDGKPVAIDTILISTQHKAAIGDISDDNAVQERIKSDLWEQVVLPVFSDLVIQPDSATRFLVNPTGKFVIGGPQGDAGLTGRKIIVDTYGGYSRHGGGAFSGKDPTKVDRSAAYACRYVAKNIVAAGLAEKCEVQLSYAIGVARPVSVLVETFGTGKVADEVLLDLVRKHFELHPAGIIEHFNLQRLPGERGGRFYQEVAAYGHFGRNDLDLPWEQTDKADTLRQEALATTQA</sequence>
<gene>
    <name evidence="1" type="primary">metK</name>
    <name type="ordered locus">syc1641_d</name>
</gene>
<name>METK_SYNP6</name>
<organism>
    <name type="scientific">Synechococcus sp. (strain ATCC 27144 / PCC 6301 / SAUG 1402/1)</name>
    <name type="common">Anacystis nidulans</name>
    <dbReference type="NCBI Taxonomy" id="269084"/>
    <lineage>
        <taxon>Bacteria</taxon>
        <taxon>Bacillati</taxon>
        <taxon>Cyanobacteriota</taxon>
        <taxon>Cyanophyceae</taxon>
        <taxon>Synechococcales</taxon>
        <taxon>Synechococcaceae</taxon>
        <taxon>Synechococcus</taxon>
    </lineage>
</organism>
<accession>Q5N1I9</accession>
<feature type="chain" id="PRO_0000174610" description="S-adenosylmethionine synthase">
    <location>
        <begin position="1"/>
        <end position="406"/>
    </location>
</feature>
<feature type="region of interest" description="Flexible loop" evidence="1">
    <location>
        <begin position="89"/>
        <end position="99"/>
    </location>
</feature>
<feature type="binding site" description="in other chain" evidence="1">
    <location>
        <position position="5"/>
    </location>
    <ligand>
        <name>ATP</name>
        <dbReference type="ChEBI" id="CHEBI:30616"/>
        <note>ligand shared between two neighboring subunits</note>
    </ligand>
</feature>
<feature type="binding site" evidence="1">
    <location>
        <position position="7"/>
    </location>
    <ligand>
        <name>Mg(2+)</name>
        <dbReference type="ChEBI" id="CHEBI:18420"/>
    </ligand>
</feature>
<feature type="binding site" evidence="1">
    <location>
        <position position="33"/>
    </location>
    <ligand>
        <name>K(+)</name>
        <dbReference type="ChEBI" id="CHEBI:29103"/>
    </ligand>
</feature>
<feature type="binding site" description="in other chain" evidence="1">
    <location>
        <position position="46"/>
    </location>
    <ligand>
        <name>L-methionine</name>
        <dbReference type="ChEBI" id="CHEBI:57844"/>
        <note>ligand shared between two neighboring subunits</note>
    </ligand>
</feature>
<feature type="binding site" description="in other chain" evidence="1">
    <location>
        <position position="89"/>
    </location>
    <ligand>
        <name>L-methionine</name>
        <dbReference type="ChEBI" id="CHEBI:57844"/>
        <note>ligand shared between two neighboring subunits</note>
    </ligand>
</feature>
<feature type="binding site" description="in other chain" evidence="1">
    <location>
        <begin position="164"/>
        <end position="166"/>
    </location>
    <ligand>
        <name>ATP</name>
        <dbReference type="ChEBI" id="CHEBI:30616"/>
        <note>ligand shared between two neighboring subunits</note>
    </ligand>
</feature>
<feature type="binding site" description="in other chain" evidence="1">
    <location>
        <begin position="240"/>
        <end position="241"/>
    </location>
    <ligand>
        <name>ATP</name>
        <dbReference type="ChEBI" id="CHEBI:30616"/>
        <note>ligand shared between two neighboring subunits</note>
    </ligand>
</feature>
<feature type="binding site" evidence="1">
    <location>
        <position position="249"/>
    </location>
    <ligand>
        <name>ATP</name>
        <dbReference type="ChEBI" id="CHEBI:30616"/>
        <note>ligand shared between two neighboring subunits</note>
    </ligand>
</feature>
<feature type="binding site" evidence="1">
    <location>
        <position position="249"/>
    </location>
    <ligand>
        <name>L-methionine</name>
        <dbReference type="ChEBI" id="CHEBI:57844"/>
        <note>ligand shared between two neighboring subunits</note>
    </ligand>
</feature>
<feature type="binding site" description="in other chain" evidence="1">
    <location>
        <begin position="255"/>
        <end position="256"/>
    </location>
    <ligand>
        <name>ATP</name>
        <dbReference type="ChEBI" id="CHEBI:30616"/>
        <note>ligand shared between two neighboring subunits</note>
    </ligand>
</feature>
<feature type="binding site" evidence="1">
    <location>
        <position position="272"/>
    </location>
    <ligand>
        <name>ATP</name>
        <dbReference type="ChEBI" id="CHEBI:30616"/>
        <note>ligand shared between two neighboring subunits</note>
    </ligand>
</feature>
<feature type="binding site" evidence="1">
    <location>
        <position position="276"/>
    </location>
    <ligand>
        <name>ATP</name>
        <dbReference type="ChEBI" id="CHEBI:30616"/>
        <note>ligand shared between two neighboring subunits</note>
    </ligand>
</feature>
<feature type="binding site" description="in other chain" evidence="1">
    <location>
        <position position="280"/>
    </location>
    <ligand>
        <name>L-methionine</name>
        <dbReference type="ChEBI" id="CHEBI:57844"/>
        <note>ligand shared between two neighboring subunits</note>
    </ligand>
</feature>
<keyword id="KW-0067">ATP-binding</keyword>
<keyword id="KW-0963">Cytoplasm</keyword>
<keyword id="KW-0460">Magnesium</keyword>
<keyword id="KW-0479">Metal-binding</keyword>
<keyword id="KW-0547">Nucleotide-binding</keyword>
<keyword id="KW-0554">One-carbon metabolism</keyword>
<keyword id="KW-0630">Potassium</keyword>
<keyword id="KW-0808">Transferase</keyword>
<evidence type="ECO:0000255" key="1">
    <source>
        <dbReference type="HAMAP-Rule" id="MF_00086"/>
    </source>
</evidence>
<protein>
    <recommendedName>
        <fullName evidence="1">S-adenosylmethionine synthase</fullName>
        <shortName evidence="1">AdoMet synthase</shortName>
        <ecNumber evidence="1">2.5.1.6</ecNumber>
    </recommendedName>
    <alternativeName>
        <fullName evidence="1">MAT</fullName>
    </alternativeName>
    <alternativeName>
        <fullName evidence="1">Methionine adenosyltransferase</fullName>
    </alternativeName>
</protein>
<comment type="function">
    <text evidence="1">Catalyzes the formation of S-adenosylmethionine (AdoMet) from methionine and ATP. The overall synthetic reaction is composed of two sequential steps, AdoMet formation and the subsequent tripolyphosphate hydrolysis which occurs prior to release of AdoMet from the enzyme.</text>
</comment>
<comment type="catalytic activity">
    <reaction evidence="1">
        <text>L-methionine + ATP + H2O = S-adenosyl-L-methionine + phosphate + diphosphate</text>
        <dbReference type="Rhea" id="RHEA:21080"/>
        <dbReference type="ChEBI" id="CHEBI:15377"/>
        <dbReference type="ChEBI" id="CHEBI:30616"/>
        <dbReference type="ChEBI" id="CHEBI:33019"/>
        <dbReference type="ChEBI" id="CHEBI:43474"/>
        <dbReference type="ChEBI" id="CHEBI:57844"/>
        <dbReference type="ChEBI" id="CHEBI:59789"/>
        <dbReference type="EC" id="2.5.1.6"/>
    </reaction>
</comment>
<comment type="cofactor">
    <cofactor evidence="1">
        <name>Mg(2+)</name>
        <dbReference type="ChEBI" id="CHEBI:18420"/>
    </cofactor>
    <text evidence="1">Binds 2 divalent ions per subunit.</text>
</comment>
<comment type="cofactor">
    <cofactor evidence="1">
        <name>K(+)</name>
        <dbReference type="ChEBI" id="CHEBI:29103"/>
    </cofactor>
    <text evidence="1">Binds 1 potassium ion per subunit.</text>
</comment>
<comment type="pathway">
    <text evidence="1">Amino-acid biosynthesis; S-adenosyl-L-methionine biosynthesis; S-adenosyl-L-methionine from L-methionine: step 1/1.</text>
</comment>
<comment type="subunit">
    <text evidence="1">Homotetramer; dimer of dimers.</text>
</comment>
<comment type="subcellular location">
    <subcellularLocation>
        <location evidence="1">Cytoplasm</location>
    </subcellularLocation>
</comment>
<comment type="similarity">
    <text evidence="1">Belongs to the AdoMet synthase family.</text>
</comment>